<sequence>MKKSRGLSDYLWAWTLILSTLSGRSYGQPSQDELKDNTTVFTRILDRLLDGYDNRLRPGLGERVTEVKTDIFVTSFGPVSDHDMEYTIDVFFRQSWKDERLKFKGPMTVLRLNNLMASKIWTPDTFFHNGKKSVAHNMTMPNKLLRITEDGTLLYTMRLTVRAECPMHLEDFPMDAHACPLKFGSYAYTRAEVVYEWTREPARSVVVAEDGSRLNQYDLLGQTVDSGIVQSSTGEYVVMTTHFHLKRKIGYFVIQTYLPCIMTVILSQVSFWLNRESVPARTVFGVTTVLTMTTLSISARNSLPKVAYATAMDWFIAVCYAFVFSALIEFATVNYFTKRGYAWDGKSVVPEKPKKVKDPLIKKNNTYAPTATSYTPNLARGDPGLATIAKSATIEPKEVKPETKPPEPKKTFNSVSKIDRLSRIAFPLLFGIFNLVYWATYLNREPQLKAPTPHQ</sequence>
<dbReference type="EMBL" id="L08490">
    <property type="protein sequence ID" value="AAC42029.1"/>
    <property type="molecule type" value="Genomic_DNA"/>
</dbReference>
<dbReference type="EMBL" id="AY574250">
    <property type="protein sequence ID" value="AAS90346.1"/>
    <property type="molecule type" value="mRNA"/>
</dbReference>
<dbReference type="EMBL" id="BC100061">
    <property type="protein sequence ID" value="AAI00062.1"/>
    <property type="molecule type" value="mRNA"/>
</dbReference>
<dbReference type="PIR" id="JQ0158">
    <property type="entry name" value="JQ0158"/>
</dbReference>
<dbReference type="RefSeq" id="NP_899155.1">
    <property type="nucleotide sequence ID" value="NM_183326.2"/>
</dbReference>
<dbReference type="RefSeq" id="XP_006246185.1">
    <property type="nucleotide sequence ID" value="XM_006246123.5"/>
</dbReference>
<dbReference type="RefSeq" id="XP_006246186.1">
    <property type="nucleotide sequence ID" value="XM_006246124.5"/>
</dbReference>
<dbReference type="RefSeq" id="XP_017452668.1">
    <property type="nucleotide sequence ID" value="XM_017597179.1"/>
</dbReference>
<dbReference type="PDB" id="6DW0">
    <property type="method" value="EM"/>
    <property type="resolution" value="3.80 A"/>
    <property type="chains" value="A/C=1-340, A/C=409-455"/>
</dbReference>
<dbReference type="PDB" id="6DW1">
    <property type="method" value="EM"/>
    <property type="resolution" value="3.10 A"/>
    <property type="chains" value="A/C=1-340, A/C=409-455"/>
</dbReference>
<dbReference type="PDBsum" id="6DW0"/>
<dbReference type="PDBsum" id="6DW1"/>
<dbReference type="EMDB" id="EMD-8922"/>
<dbReference type="EMDB" id="EMD-8923"/>
<dbReference type="SMR" id="P62813"/>
<dbReference type="BioGRID" id="248322">
    <property type="interactions" value="4"/>
</dbReference>
<dbReference type="ComplexPortal" id="CPX-250">
    <property type="entry name" value="GABA-A receptor, alpha1-beta2-gamma2"/>
</dbReference>
<dbReference type="ComplexPortal" id="CPX-410">
    <property type="entry name" value="GABA-A receptor, alpha1-beta3-gamma2"/>
</dbReference>
<dbReference type="CORUM" id="P62813"/>
<dbReference type="FunCoup" id="P62813">
    <property type="interactions" value="1458"/>
</dbReference>
<dbReference type="IntAct" id="P62813">
    <property type="interactions" value="3"/>
</dbReference>
<dbReference type="MINT" id="P62813"/>
<dbReference type="STRING" id="10116.ENSRNOP00000004725"/>
<dbReference type="BindingDB" id="P62813"/>
<dbReference type="ChEMBL" id="CHEMBL343"/>
<dbReference type="DrugCentral" id="P62813"/>
<dbReference type="GlyCosmos" id="P62813">
    <property type="glycosylation" value="2 sites, No reported glycans"/>
</dbReference>
<dbReference type="GlyGen" id="P62813">
    <property type="glycosylation" value="2 sites"/>
</dbReference>
<dbReference type="iPTMnet" id="P62813"/>
<dbReference type="PhosphoSitePlus" id="P62813"/>
<dbReference type="PaxDb" id="10116-ENSRNOP00000004725"/>
<dbReference type="ABCD" id="P62813">
    <property type="antibodies" value="2 sequenced antibodies"/>
</dbReference>
<dbReference type="Ensembl" id="ENSRNOT00000004725.8">
    <property type="protein sequence ID" value="ENSRNOP00000004725.5"/>
    <property type="gene ID" value="ENSRNOG00000003512.8"/>
</dbReference>
<dbReference type="GeneID" id="29705"/>
<dbReference type="KEGG" id="rno:29705"/>
<dbReference type="UCSC" id="RGD:61855">
    <property type="organism name" value="rat"/>
</dbReference>
<dbReference type="AGR" id="RGD:61855"/>
<dbReference type="CTD" id="2554"/>
<dbReference type="RGD" id="61855">
    <property type="gene designation" value="Gabra1"/>
</dbReference>
<dbReference type="eggNOG" id="KOG3642">
    <property type="taxonomic scope" value="Eukaryota"/>
</dbReference>
<dbReference type="GeneTree" id="ENSGT00940000159136"/>
<dbReference type="HOGENOM" id="CLU_010920_2_1_1"/>
<dbReference type="InParanoid" id="P62813"/>
<dbReference type="OrthoDB" id="42535at9989"/>
<dbReference type="PhylomeDB" id="P62813"/>
<dbReference type="TreeFam" id="TF315453"/>
<dbReference type="Reactome" id="R-RNO-977443">
    <property type="pathway name" value="GABA receptor activation"/>
</dbReference>
<dbReference type="PRO" id="PR:P62813"/>
<dbReference type="Proteomes" id="UP000002494">
    <property type="component" value="Chromosome 10"/>
</dbReference>
<dbReference type="Bgee" id="ENSRNOG00000003512">
    <property type="expression patterns" value="Expressed in cerebellum and 6 other cell types or tissues"/>
</dbReference>
<dbReference type="GO" id="GO:0034707">
    <property type="term" value="C:chloride channel complex"/>
    <property type="evidence" value="ECO:0007669"/>
    <property type="project" value="UniProtKB-KW"/>
</dbReference>
<dbReference type="GO" id="GO:0030659">
    <property type="term" value="C:cytoplasmic vesicle membrane"/>
    <property type="evidence" value="ECO:0007669"/>
    <property type="project" value="UniProtKB-SubCell"/>
</dbReference>
<dbReference type="GO" id="GO:0032590">
    <property type="term" value="C:dendrite membrane"/>
    <property type="evidence" value="ECO:0000318"/>
    <property type="project" value="GO_Central"/>
</dbReference>
<dbReference type="GO" id="GO:0043197">
    <property type="term" value="C:dendritic spine"/>
    <property type="evidence" value="ECO:0000266"/>
    <property type="project" value="RGD"/>
</dbReference>
<dbReference type="GO" id="GO:1902710">
    <property type="term" value="C:GABA receptor complex"/>
    <property type="evidence" value="ECO:0000314"/>
    <property type="project" value="BHF-UCL"/>
</dbReference>
<dbReference type="GO" id="GO:1902711">
    <property type="term" value="C:GABA-A receptor complex"/>
    <property type="evidence" value="ECO:0000250"/>
    <property type="project" value="UniProtKB"/>
</dbReference>
<dbReference type="GO" id="GO:0098982">
    <property type="term" value="C:GABA-ergic synapse"/>
    <property type="evidence" value="ECO:0000314"/>
    <property type="project" value="SynGO"/>
</dbReference>
<dbReference type="GO" id="GO:0005886">
    <property type="term" value="C:plasma membrane"/>
    <property type="evidence" value="ECO:0000266"/>
    <property type="project" value="RGD"/>
</dbReference>
<dbReference type="GO" id="GO:0098794">
    <property type="term" value="C:postsynapse"/>
    <property type="evidence" value="ECO:0000318"/>
    <property type="project" value="GO_Central"/>
</dbReference>
<dbReference type="GO" id="GO:0099634">
    <property type="term" value="C:postsynaptic specialization membrane"/>
    <property type="evidence" value="ECO:0000314"/>
    <property type="project" value="UniProtKB"/>
</dbReference>
<dbReference type="GO" id="GO:0050809">
    <property type="term" value="F:diazepam binding"/>
    <property type="evidence" value="ECO:0000314"/>
    <property type="project" value="RGD"/>
</dbReference>
<dbReference type="GO" id="GO:0004890">
    <property type="term" value="F:GABA-A receptor activity"/>
    <property type="evidence" value="ECO:0000314"/>
    <property type="project" value="UniProtKB"/>
</dbReference>
<dbReference type="GO" id="GO:0022851">
    <property type="term" value="F:GABA-gated chloride ion channel activity"/>
    <property type="evidence" value="ECO:0000314"/>
    <property type="project" value="UniProtKB"/>
</dbReference>
<dbReference type="GO" id="GO:0099507">
    <property type="term" value="F:ligand-gated monoatomic ion channel activity involved in regulation of presynaptic membrane potential"/>
    <property type="evidence" value="ECO:0000314"/>
    <property type="project" value="SynGO"/>
</dbReference>
<dbReference type="GO" id="GO:1904315">
    <property type="term" value="F:transmitter-gated monoatomic ion channel activity involved in regulation of postsynaptic membrane potential"/>
    <property type="evidence" value="ECO:0000266"/>
    <property type="project" value="RGD"/>
</dbReference>
<dbReference type="GO" id="GO:0071420">
    <property type="term" value="P:cellular response to histamine"/>
    <property type="evidence" value="ECO:0000314"/>
    <property type="project" value="UniProtKB"/>
</dbReference>
<dbReference type="GO" id="GO:1902476">
    <property type="term" value="P:chloride transmembrane transport"/>
    <property type="evidence" value="ECO:0000266"/>
    <property type="project" value="RGD"/>
</dbReference>
<dbReference type="GO" id="GO:0007214">
    <property type="term" value="P:gamma-aminobutyric acid signaling pathway"/>
    <property type="evidence" value="ECO:0000266"/>
    <property type="project" value="RGD"/>
</dbReference>
<dbReference type="GO" id="GO:1904862">
    <property type="term" value="P:inhibitory synapse assembly"/>
    <property type="evidence" value="ECO:0000250"/>
    <property type="project" value="UniProtKB"/>
</dbReference>
<dbReference type="GO" id="GO:0010996">
    <property type="term" value="P:response to auditory stimulus"/>
    <property type="evidence" value="ECO:0000270"/>
    <property type="project" value="RGD"/>
</dbReference>
<dbReference type="GO" id="GO:1904313">
    <property type="term" value="P:response to methamphetamine hydrochloride"/>
    <property type="evidence" value="ECO:0000270"/>
    <property type="project" value="RGD"/>
</dbReference>
<dbReference type="GO" id="GO:0051932">
    <property type="term" value="P:synaptic transmission, GABAergic"/>
    <property type="evidence" value="ECO:0000314"/>
    <property type="project" value="BHF-UCL"/>
</dbReference>
<dbReference type="CDD" id="cd19034">
    <property type="entry name" value="LGIC_ECD_GABAAR_A1"/>
    <property type="match status" value="1"/>
</dbReference>
<dbReference type="CDD" id="cd19052">
    <property type="entry name" value="LGIC_TM_GABAAR_alpha"/>
    <property type="match status" value="1"/>
</dbReference>
<dbReference type="FunFam" id="2.70.170.10:FF:000001">
    <property type="entry name" value="Gamma-aminobutyric acid A receptor subunit alpha-2"/>
    <property type="match status" value="1"/>
</dbReference>
<dbReference type="FunFam" id="1.20.58.390:FF:000002">
    <property type="entry name" value="Putative gamma-aminobutyric acid receptor subunit alpha-5"/>
    <property type="match status" value="1"/>
</dbReference>
<dbReference type="Gene3D" id="2.70.170.10">
    <property type="entry name" value="Neurotransmitter-gated ion-channel ligand-binding domain"/>
    <property type="match status" value="1"/>
</dbReference>
<dbReference type="Gene3D" id="1.20.58.390">
    <property type="entry name" value="Neurotransmitter-gated ion-channel transmembrane domain"/>
    <property type="match status" value="1"/>
</dbReference>
<dbReference type="InterPro" id="IPR006028">
    <property type="entry name" value="GABAA/Glycine_rcpt"/>
</dbReference>
<dbReference type="InterPro" id="IPR001390">
    <property type="entry name" value="GABAAa_rcpt"/>
</dbReference>
<dbReference type="InterPro" id="IPR005431">
    <property type="entry name" value="GABBAa1_rcpt"/>
</dbReference>
<dbReference type="InterPro" id="IPR047024">
    <property type="entry name" value="Gabra-1-6_TM"/>
</dbReference>
<dbReference type="InterPro" id="IPR047079">
    <property type="entry name" value="GABRA1_ECD"/>
</dbReference>
<dbReference type="InterPro" id="IPR006202">
    <property type="entry name" value="Neur_chan_lig-bd"/>
</dbReference>
<dbReference type="InterPro" id="IPR036734">
    <property type="entry name" value="Neur_chan_lig-bd_sf"/>
</dbReference>
<dbReference type="InterPro" id="IPR006201">
    <property type="entry name" value="Neur_channel"/>
</dbReference>
<dbReference type="InterPro" id="IPR036719">
    <property type="entry name" value="Neuro-gated_channel_TM_sf"/>
</dbReference>
<dbReference type="InterPro" id="IPR038050">
    <property type="entry name" value="Neuro_actylchol_rec"/>
</dbReference>
<dbReference type="InterPro" id="IPR006029">
    <property type="entry name" value="Neurotrans-gated_channel_TM"/>
</dbReference>
<dbReference type="InterPro" id="IPR018000">
    <property type="entry name" value="Neurotransmitter_ion_chnl_CS"/>
</dbReference>
<dbReference type="NCBIfam" id="TIGR00860">
    <property type="entry name" value="LIC"/>
    <property type="match status" value="1"/>
</dbReference>
<dbReference type="PANTHER" id="PTHR18945">
    <property type="entry name" value="NEUROTRANSMITTER GATED ION CHANNEL"/>
    <property type="match status" value="1"/>
</dbReference>
<dbReference type="Pfam" id="PF02931">
    <property type="entry name" value="Neur_chan_LBD"/>
    <property type="match status" value="1"/>
</dbReference>
<dbReference type="Pfam" id="PF02932">
    <property type="entry name" value="Neur_chan_memb"/>
    <property type="match status" value="2"/>
</dbReference>
<dbReference type="PRINTS" id="PR01079">
    <property type="entry name" value="GABAARALPHA"/>
</dbReference>
<dbReference type="PRINTS" id="PR01614">
    <property type="entry name" value="GABAARALPHA1"/>
</dbReference>
<dbReference type="PRINTS" id="PR00253">
    <property type="entry name" value="GABAARECEPTR"/>
</dbReference>
<dbReference type="PRINTS" id="PR00252">
    <property type="entry name" value="NRIONCHANNEL"/>
</dbReference>
<dbReference type="SUPFAM" id="SSF90112">
    <property type="entry name" value="Neurotransmitter-gated ion-channel transmembrane pore"/>
    <property type="match status" value="1"/>
</dbReference>
<dbReference type="SUPFAM" id="SSF63712">
    <property type="entry name" value="Nicotinic receptor ligand binding domain-like"/>
    <property type="match status" value="1"/>
</dbReference>
<dbReference type="PROSITE" id="PS00236">
    <property type="entry name" value="NEUROTR_ION_CHANNEL"/>
    <property type="match status" value="1"/>
</dbReference>
<name>GBRA1_RAT</name>
<proteinExistence type="evidence at protein level"/>
<feature type="signal peptide" evidence="3">
    <location>
        <begin position="1"/>
        <end position="27"/>
    </location>
</feature>
<feature type="chain" id="PRO_0000000430" description="Gamma-aminobutyric acid receptor subunit alpha-1">
    <location>
        <begin position="28"/>
        <end position="455"/>
    </location>
</feature>
<feature type="topological domain" description="Extracellular" evidence="17">
    <location>
        <begin position="28"/>
        <end position="252"/>
    </location>
</feature>
<feature type="transmembrane region" description="Helical" evidence="1">
    <location>
        <begin position="253"/>
        <end position="273"/>
    </location>
</feature>
<feature type="topological domain" description="Cytoplasmic" evidence="17">
    <location>
        <begin position="274"/>
        <end position="278"/>
    </location>
</feature>
<feature type="transmembrane region" description="Helical" evidence="1">
    <location>
        <begin position="279"/>
        <end position="300"/>
    </location>
</feature>
<feature type="topological domain" description="Extracellular" evidence="17">
    <location>
        <begin position="301"/>
        <end position="310"/>
    </location>
</feature>
<feature type="transmembrane region" description="Helical" evidence="1">
    <location>
        <begin position="311"/>
        <end position="332"/>
    </location>
</feature>
<feature type="topological domain" description="Cytoplasmic" evidence="17">
    <location>
        <begin position="333"/>
        <end position="420"/>
    </location>
</feature>
<feature type="transmembrane region" description="Helical" evidence="1">
    <location>
        <begin position="421"/>
        <end position="440"/>
    </location>
</feature>
<feature type="topological domain" description="Extracellular" evidence="17">
    <location>
        <begin position="441"/>
        <end position="455"/>
    </location>
</feature>
<feature type="binding site" evidence="12 20 21">
    <location>
        <position position="93"/>
    </location>
    <ligand>
        <name>4-aminobutanoate</name>
        <dbReference type="ChEBI" id="CHEBI:59888"/>
        <note>ligand shared with the neighboring beta subunit</note>
    </ligand>
</feature>
<feature type="binding site" evidence="12 20 21">
    <location>
        <position position="156"/>
    </location>
    <ligand>
        <name>4-aminobutanoate</name>
        <dbReference type="ChEBI" id="CHEBI:59888"/>
        <note>ligand shared with the neighboring beta subunit</note>
    </ligand>
</feature>
<feature type="glycosylation site" description="N-linked (GlcNAc...) asparagine" evidence="3">
    <location>
        <position position="37"/>
    </location>
</feature>
<feature type="glycosylation site" description="N-linked (GlcNAc...) asparagine" evidence="12 20 21">
    <location>
        <position position="137"/>
    </location>
</feature>
<feature type="disulfide bond" evidence="12 20 21">
    <location>
        <begin position="165"/>
        <end position="179"/>
    </location>
</feature>
<feature type="mutagenesis site" description="Strongly decreases the affinity for GABA-dependent channel gating." evidence="5">
    <original>F</original>
    <variation>L</variation>
    <location>
        <position position="91"/>
    </location>
</feature>
<feature type="sequence conflict" description="In Ref. 3; no nucleotide entry." evidence="17" ref="3">
    <original>F</original>
    <variation>L</variation>
    <location>
        <position position="91"/>
    </location>
</feature>
<feature type="sequence conflict" description="In Ref. 1; no nucleotide entry." evidence="17" ref="1">
    <original>L</original>
    <variation>I</variation>
    <location>
        <position position="435"/>
    </location>
</feature>
<feature type="helix" evidence="22">
    <location>
        <begin position="40"/>
        <end position="45"/>
    </location>
</feature>
<feature type="turn" evidence="22">
    <location>
        <begin position="46"/>
        <end position="51"/>
    </location>
</feature>
<feature type="turn" evidence="22">
    <location>
        <begin position="58"/>
        <end position="61"/>
    </location>
</feature>
<feature type="strand" evidence="22">
    <location>
        <begin position="65"/>
        <end position="76"/>
    </location>
</feature>
<feature type="turn" evidence="22">
    <location>
        <begin position="81"/>
        <end position="84"/>
    </location>
</feature>
<feature type="strand" evidence="22">
    <location>
        <begin position="85"/>
        <end position="95"/>
    </location>
</feature>
<feature type="strand" evidence="22">
    <location>
        <begin position="108"/>
        <end position="112"/>
    </location>
</feature>
<feature type="turn" evidence="22">
    <location>
        <begin position="114"/>
        <end position="116"/>
    </location>
</feature>
<feature type="helix" evidence="22">
    <location>
        <begin position="117"/>
        <end position="119"/>
    </location>
</feature>
<feature type="strand" evidence="22">
    <location>
        <begin position="130"/>
        <end position="132"/>
    </location>
</feature>
<feature type="strand" evidence="22">
    <location>
        <begin position="137"/>
        <end position="143"/>
    </location>
</feature>
<feature type="strand" evidence="22">
    <location>
        <begin position="145"/>
        <end position="148"/>
    </location>
</feature>
<feature type="strand" evidence="22">
    <location>
        <begin position="157"/>
        <end position="164"/>
    </location>
</feature>
<feature type="strand" evidence="22">
    <location>
        <begin position="176"/>
        <end position="184"/>
    </location>
</feature>
<feature type="turn" evidence="22">
    <location>
        <begin position="190"/>
        <end position="192"/>
    </location>
</feature>
<feature type="strand" evidence="22">
    <location>
        <begin position="193"/>
        <end position="199"/>
    </location>
</feature>
<feature type="helix" evidence="22">
    <location>
        <begin position="201"/>
        <end position="203"/>
    </location>
</feature>
<feature type="strand" evidence="22">
    <location>
        <begin position="205"/>
        <end position="207"/>
    </location>
</feature>
<feature type="strand" evidence="22">
    <location>
        <begin position="215"/>
        <end position="225"/>
    </location>
</feature>
<feature type="strand" evidence="22">
    <location>
        <begin position="228"/>
        <end position="230"/>
    </location>
</feature>
<feature type="strand" evidence="22">
    <location>
        <begin position="235"/>
        <end position="247"/>
    </location>
</feature>
<organism>
    <name type="scientific">Rattus norvegicus</name>
    <name type="common">Rat</name>
    <dbReference type="NCBI Taxonomy" id="10116"/>
    <lineage>
        <taxon>Eukaryota</taxon>
        <taxon>Metazoa</taxon>
        <taxon>Chordata</taxon>
        <taxon>Craniata</taxon>
        <taxon>Vertebrata</taxon>
        <taxon>Euteleostomi</taxon>
        <taxon>Mammalia</taxon>
        <taxon>Eutheria</taxon>
        <taxon>Euarchontoglires</taxon>
        <taxon>Glires</taxon>
        <taxon>Rodentia</taxon>
        <taxon>Myomorpha</taxon>
        <taxon>Muroidea</taxon>
        <taxon>Muridae</taxon>
        <taxon>Murinae</taxon>
        <taxon>Rattus</taxon>
    </lineage>
</organism>
<keyword id="KW-0002">3D-structure</keyword>
<keyword id="KW-1003">Cell membrane</keyword>
<keyword id="KW-0868">Chloride</keyword>
<keyword id="KW-0869">Chloride channel</keyword>
<keyword id="KW-0968">Cytoplasmic vesicle</keyword>
<keyword id="KW-1015">Disulfide bond</keyword>
<keyword id="KW-0325">Glycoprotein</keyword>
<keyword id="KW-0407">Ion channel</keyword>
<keyword id="KW-0406">Ion transport</keyword>
<keyword id="KW-1071">Ligand-gated ion channel</keyword>
<keyword id="KW-0472">Membrane</keyword>
<keyword id="KW-0628">Postsynaptic cell membrane</keyword>
<keyword id="KW-0675">Receptor</keyword>
<keyword id="KW-1185">Reference proteome</keyword>
<keyword id="KW-0732">Signal</keyword>
<keyword id="KW-0770">Synapse</keyword>
<keyword id="KW-0812">Transmembrane</keyword>
<keyword id="KW-1133">Transmembrane helix</keyword>
<keyword id="KW-0813">Transport</keyword>
<gene>
    <name evidence="19" type="primary">Gabra1</name>
    <name type="synonym">Gabra-1</name>
</gene>
<reference key="1">
    <citation type="journal article" date="1989" name="FEBS Lett.">
        <title>Cloning and expression of a novel rat GABAA receptor.</title>
        <authorList>
            <person name="Lolait S.J."/>
            <person name="O'Carroll A.-M."/>
            <person name="Kusano K."/>
            <person name="Muller J.-M."/>
            <person name="Brownstein M.J."/>
            <person name="Mahan L.C."/>
        </authorList>
    </citation>
    <scope>NUCLEOTIDE SEQUENCE [GENOMIC DNA]</scope>
    <scope>FUNCTION</scope>
    <scope>SUBCELLULAR LOCATION</scope>
    <scope>SUBUNIT</scope>
</reference>
<reference key="2">
    <citation type="journal article" date="1989" name="Neuron">
        <title>A novel alpha subunit in rat brain GABAA receptors.</title>
        <authorList>
            <person name="Khrestchatisky M."/>
            <person name="Maclennan A.J."/>
            <person name="Chiang M.Y."/>
            <person name="Xu W."/>
            <person name="Jackson M.B."/>
            <person name="Brecha N."/>
            <person name="Sternini C."/>
            <person name="Olsen R.W."/>
            <person name="Tobin A.J."/>
        </authorList>
    </citation>
    <scope>NUCLEOTIDE SEQUENCE [GENOMIC DNA]</scope>
</reference>
<reference key="3">
    <citation type="journal article" date="1990" name="Brain Res. Mol. Brain Res.">
        <title>GABAA-receptor expressed from rat brain alpha- and beta-subunit cDNAs displays potentiation by benzodiazepine receptor ligands.</title>
        <authorList>
            <person name="Malherbe P."/>
            <person name="Draguhn A."/>
            <person name="Multhaup G."/>
            <person name="Beyreuther K."/>
            <person name="Mohler H."/>
        </authorList>
    </citation>
    <scope>NUCLEOTIDE SEQUENCE [GENOMIC DNA]</scope>
    <scope>FUNCTION</scope>
    <scope>ACTIVITY REGULATION</scope>
    <scope>TRANSPORTER ACTIVITY</scope>
</reference>
<reference key="4">
    <citation type="journal article" date="1990" name="Cold Spring Harb. Symp. Quant. Biol.">
        <title>The GABAA receptor family: molecular and functional diversity.</title>
        <authorList>
            <person name="Seeburg P.H."/>
            <person name="Wisden W."/>
            <person name="Verdoorn T."/>
            <person name="Pritchett D."/>
            <person name="Werner P."/>
            <person name="Herb A."/>
            <person name="Lueddens H."/>
            <person name="Sprengel R."/>
            <person name="Sakmann B."/>
        </authorList>
    </citation>
    <scope>NUCLEOTIDE SEQUENCE [GENOMIC DNA]</scope>
    <source>
        <tissue>Brain</tissue>
    </source>
</reference>
<reference key="5">
    <citation type="submission" date="2004-03" db="EMBL/GenBank/DDBJ databases">
        <authorList>
            <person name="Groot-Kormelink P.J."/>
        </authorList>
    </citation>
    <scope>NUCLEOTIDE SEQUENCE [MRNA]</scope>
    <source>
        <strain>Sprague-Dawley</strain>
        <tissue>Brain</tissue>
    </source>
</reference>
<reference key="6">
    <citation type="journal article" date="2004" name="Genome Res.">
        <title>The status, quality, and expansion of the NIH full-length cDNA project: the Mammalian Gene Collection (MGC).</title>
        <authorList>
            <consortium name="The MGC Project Team"/>
        </authorList>
    </citation>
    <scope>NUCLEOTIDE SEQUENCE [LARGE SCALE MRNA]</scope>
    <source>
        <tissue>Lung</tissue>
    </source>
</reference>
<reference key="7">
    <citation type="journal article" date="1992" name="EMBO J.">
        <title>Point mutations affecting antagonist affinity and agonist dependent gating of GABAA receptor channels.</title>
        <authorList>
            <person name="Sigel E."/>
            <person name="Baur R."/>
            <person name="Kellenberger S."/>
            <person name="Malherbe P."/>
        </authorList>
    </citation>
    <scope>MUTAGENESIS OF PHE-91</scope>
    <scope>FUNCTION</scope>
    <scope>SUBCELLULAR LOCATION</scope>
    <scope>ACTIVITY REGULATION</scope>
</reference>
<reference key="8">
    <citation type="journal article" date="1998" name="J. Neurosci.">
        <title>Segregation of different GABAA receptors to synaptic and extrasynaptic membranes of cerebellar granule cells.</title>
        <authorList>
            <person name="Nusser Z."/>
            <person name="Sieghart W."/>
            <person name="Somogyi P."/>
        </authorList>
    </citation>
    <scope>FUNCTION</scope>
    <scope>SUBCELLULAR LOCATION</scope>
    <scope>TISSUE SPECIFICITY</scope>
</reference>
<reference key="9">
    <citation type="journal article" date="1999" name="Mol. Pharmacol.">
        <title>Spontaneous and gamma-aminobutyric acid (GABA)-activated GABA(A) receptor channels formed by epsilon subunit-containing isoforms.</title>
        <authorList>
            <person name="Neelands T.R."/>
            <person name="Fisher J.L."/>
            <person name="Bianchi M."/>
            <person name="Macdonald R.L."/>
        </authorList>
    </citation>
    <scope>FUNCTION</scope>
    <scope>TRANSPORTER ACTIVITY</scope>
    <scope>ACTIVITY REGULATION</scope>
    <scope>SUBCELLULAR LOCATION</scope>
    <scope>TISSUE SPECIFICITY</scope>
    <scope>INTERACTION WITH GABRB3 AND GABRE</scope>
</reference>
<reference key="10">
    <citation type="journal article" date="2001" name="Nat. Neurosci.">
        <title>GABA(A) receptor cell surface number and subunit stability are regulated by the ubiquitin-like protein Plic-1.</title>
        <authorList>
            <person name="Bedford F.K."/>
            <person name="Kittler J.T."/>
            <person name="Muller E."/>
            <person name="Thomas P."/>
            <person name="Uren J.M."/>
            <person name="Merlo D."/>
            <person name="Wisden W."/>
            <person name="Triller A."/>
            <person name="Smart T.G."/>
            <person name="Moss S.J."/>
        </authorList>
    </citation>
    <scope>INTERACTION WITH UBQLN1</scope>
</reference>
<reference key="11">
    <citation type="journal article" date="2006" name="J. Biol. Chem.">
        <title>A novel function of ionotropic gamma-aminobutyric acid receptors involving alveolar fluid homeostasis.</title>
        <authorList>
            <person name="Jin N."/>
            <person name="Kolliputi N."/>
            <person name="Gou D."/>
            <person name="Weng T."/>
            <person name="Liu L."/>
        </authorList>
    </citation>
    <scope>TISSUE SPECIFICITY</scope>
</reference>
<reference key="12">
    <citation type="journal article" date="2008" name="J. Biol. Chem.">
        <title>Histamine action on vertebrate GABAA receptors: direct channel gating and potentiation of GABA responses.</title>
        <authorList>
            <person name="Saras A."/>
            <person name="Gisselmann G."/>
            <person name="Vogt-Eisele A.K."/>
            <person name="Erlkamp K.S."/>
            <person name="Kletke O."/>
            <person name="Pusch H."/>
            <person name="Hatt H."/>
        </authorList>
    </citation>
    <scope>FUNCTION</scope>
    <scope>SUBCELLULAR LOCATION</scope>
    <scope>SUBUNIT</scope>
    <scope>TRANSPORTER ACTIVITY</scope>
</reference>
<reference key="13">
    <citation type="journal article" date="2014" name="Eur. J. Cell Biol.">
        <title>The kinesin KIF21B participates in the cell surface delivery of gamma2 subunit-containing GABAA receptors.</title>
        <authorList>
            <person name="Labonte D."/>
            <person name="Thies E."/>
            <person name="Kneussel M."/>
        </authorList>
    </citation>
    <scope>INTERACTION WITH KIF21B</scope>
    <scope>SUBCELLULAR LOCATION</scope>
    <scope>TISSUE SPECIFICITY</scope>
</reference>
<reference key="14">
    <citation type="journal article" date="2017" name="Neuron">
        <title>GARLH family proteins stabilize GABAA receptors at synapses.</title>
        <authorList>
            <person name="Yamasaki T."/>
            <person name="Hoyos-Ramirez E."/>
            <person name="Martenson J.S."/>
            <person name="Morimoto-Tomita M."/>
            <person name="Tomita S."/>
        </authorList>
    </citation>
    <scope>IDENTIFICATION BY MASS SPECTROMETRY</scope>
    <scope>IDENTIFICATION IN A COMPLEX WITH NLGN2; LHFPL4; GABRB2; GABRG2 AND GABRB3</scope>
    <scope>INTERACTION WITH LHFLP4 AND NLGN2</scope>
</reference>
<reference evidence="20 21" key="15">
    <citation type="journal article" date="2018" name="Elife">
        <title>Cryo-EM structure of the benzodiazepine-sensitive alpha1beta1gamma2S tri-heteromeric GABAA receptor in complex with GABA.</title>
        <authorList>
            <person name="Phulera S."/>
            <person name="Zhu H."/>
            <person name="Yu J."/>
            <person name="Claxton D.P."/>
            <person name="Yoder N."/>
            <person name="Yoshioka C."/>
            <person name="Gouaux E."/>
        </authorList>
    </citation>
    <scope>STRUCTURE BY ELECTRON MICROSCOPY (3.10 ANGSTROMS) OF 1-333 AND 440-474 IN COMPLEX WITH GABA</scope>
    <scope>FUNCTION</scope>
    <scope>SUBUNIT</scope>
    <scope>INTERACTION WITH GABRB1 AND GABRG2</scope>
    <scope>DISULFIDE BOND</scope>
    <scope>GLYCOSYLATION AT ASN-137</scope>
</reference>
<protein>
    <recommendedName>
        <fullName>Gamma-aminobutyric acid receptor subunit alpha-1</fullName>
    </recommendedName>
    <alternativeName>
        <fullName evidence="15">GABA(A) receptor subunit alpha-1</fullName>
        <shortName evidence="16">GABAAR subunit alpha-1</shortName>
    </alternativeName>
</protein>
<accession>P62813</accession>
<accession>P18504</accession>
<accession>Q53YK4</accession>
<evidence type="ECO:0000250" key="1">
    <source>
        <dbReference type="UniProtKB" id="P14867"/>
    </source>
</evidence>
<evidence type="ECO:0000250" key="2">
    <source>
        <dbReference type="UniProtKB" id="P62812"/>
    </source>
</evidence>
<evidence type="ECO:0000255" key="3"/>
<evidence type="ECO:0000269" key="4">
    <source>
    </source>
</evidence>
<evidence type="ECO:0000269" key="5">
    <source>
    </source>
</evidence>
<evidence type="ECO:0000269" key="6">
    <source>
    </source>
</evidence>
<evidence type="ECO:0000269" key="7">
    <source>
    </source>
</evidence>
<evidence type="ECO:0000269" key="8">
    <source>
    </source>
</evidence>
<evidence type="ECO:0000269" key="9">
    <source>
    </source>
</evidence>
<evidence type="ECO:0000269" key="10">
    <source>
    </source>
</evidence>
<evidence type="ECO:0000269" key="11">
    <source>
    </source>
</evidence>
<evidence type="ECO:0000269" key="12">
    <source>
    </source>
</evidence>
<evidence type="ECO:0000269" key="13">
    <source>
    </source>
</evidence>
<evidence type="ECO:0000269" key="14">
    <source>
    </source>
</evidence>
<evidence type="ECO:0000303" key="15">
    <source>
    </source>
</evidence>
<evidence type="ECO:0000303" key="16">
    <source>
    </source>
</evidence>
<evidence type="ECO:0000305" key="17"/>
<evidence type="ECO:0000305" key="18">
    <source>
    </source>
</evidence>
<evidence type="ECO:0000312" key="19">
    <source>
        <dbReference type="RGD" id="61855"/>
    </source>
</evidence>
<evidence type="ECO:0007744" key="20">
    <source>
        <dbReference type="PDB" id="6DW0"/>
    </source>
</evidence>
<evidence type="ECO:0007744" key="21">
    <source>
        <dbReference type="PDB" id="6DW1"/>
    </source>
</evidence>
<evidence type="ECO:0007829" key="22">
    <source>
        <dbReference type="PDB" id="6DW1"/>
    </source>
</evidence>
<comment type="function">
    <text evidence="1 2 5 7 8 10 12 13 14">Alpha subunit of the heteropentameric ligand-gated chloride channel gated by gamma-aminobutyric acid (GABA), a major inhibitory neurotransmitter in the brain (PubMed:1376242, PubMed:1977069, PubMed:2540033, PubMed:9882711). GABA-gated chloride channels, also named GABA(A) receptors (GABAAR), consist of five subunits arranged around a central pore and contain GABA active binding site(s) located at the alpha and beta subunit interface(s) (PubMed:30044221). When activated by GABA, GABAARs selectively allow the flow of chloride anions across the cell membrane down their electrochemical gradient (PubMed:18281286, PubMed:1977069, PubMed:9882711). Alpha-1/GABRA1-containing GABAARs are largely synaptic (PubMed:9464994). Chloride influx into the postsynaptic neuron following GABAAR opening decreases the neuron ability to generate a new action potential, thereby reducing nerve transmission (PubMed:18281286, PubMed:1977069). GABAARs containing alpha-1 and beta-2 or -3 subunits exhibit synaptogenic activity; the gamma-2 subunit being necessary but not sufficient to induce rapid synaptic contacts formation (By similarity). GABAARs function also as histamine receptor where histamine binds at the interface of two neighboring beta subunits and potentiates GABA response (PubMed:18281286, PubMed:1977069). GABAARs containing alpha, beta and epsilon subunits also permit spontaneous chloride channel activity while preserving the structural information required for GABA-gated openings (PubMed:9882711). Alpha-1-mediated plasticity in the orbitofrontal cortex regulates context-dependent action selection (By similarity). Together with rho subunits, may also control neuronal and glial GABAergic transmission in the cerebellum (By similarity).</text>
</comment>
<comment type="catalytic activity">
    <reaction evidence="7 8 14">
        <text>chloride(in) = chloride(out)</text>
        <dbReference type="Rhea" id="RHEA:29823"/>
        <dbReference type="ChEBI" id="CHEBI:17996"/>
    </reaction>
</comment>
<comment type="activity regulation">
    <text evidence="1 5 7 8 14">Allosterically activated by benzodiazepines and pentobarbital (PubMed:1977069). Allosterically activated by the neuroanesthetic alphaxalone (By similarity). Inhibited by the antagonist bicuculline (PubMed:1376242, PubMed:1977069). Potentiated by pentobarbital, loreclezole, and lanthanum and inhibited by zinc and furosemide (PubMed:9882711). Potentiated by histamine (PubMed:18281286).</text>
</comment>
<comment type="subunit">
    <text evidence="2 4 7 9 10 11 12 18">Heteropentamer, formed by a combination of alpha (GABRA1-6), beta (GABRB1-3), gamma (GABRG1-3), delta (GABRD), epsilon (GABRE), rho (GABRR1-3), pi (GABRP) and theta (GABRQ) subunits, each subunit exhibiting distinct physiological and pharmacological properties (Probable) (PubMed:18281286, PubMed:2540033, PubMed:30044221). Interacts with UBQLN1 (PubMed:11528422). Interacts with TRAK1 (By similarity). Interacts with KIF21B (PubMed:25172774). Identified in a complex of 720 kDa composed of LHFPL4, NLGN2, GABRA1, GABRB2, GABRG2 and GABRB3 (PubMed:28279354). Interacts with LHFPL4 (PubMed:28279354). Interacts with NLGN2 (PubMed:28279354). Interacts with SHISA7; interaction leads to the regulation of GABA(A) receptor trafficking, channel deactivation kinetics and pharmacology (By similarity).</text>
</comment>
<comment type="interaction">
    <interactant intactId="EBI-6258192">
        <id>P62813</id>
    </interactant>
    <interactant intactId="EBI-518443">
        <id>Q63787</id>
        <label>Pik3r1</label>
    </interactant>
    <organismsDiffer>false</organismsDiffer>
    <experiments>4</experiments>
</comment>
<comment type="subcellular location">
    <subcellularLocation>
        <location evidence="13">Postsynaptic cell membrane</location>
        <topology evidence="12">Multi-pass membrane protein</topology>
    </subcellularLocation>
    <subcellularLocation>
        <location evidence="5 7 10 13">Cell membrane</location>
        <topology evidence="12">Multi-pass membrane protein</topology>
    </subcellularLocation>
    <subcellularLocation>
        <location evidence="9">Cytoplasmic vesicle membrane</location>
    </subcellularLocation>
    <text evidence="13">The alpha-1 subunits (alpha-1-beta-2/3-gamma-2 receptors) are present in Golgi synapses and on the extrasynaptic membranes (PubMed:9464994). Mainly located in GABAergic synapses on granule cells (PubMed:9464994).</text>
</comment>
<comment type="tissue specificity">
    <text evidence="6 9 13">Expressed in brain (at protein level). Expressed in lungs, in alveolar epithelium (PubMed:17003036).</text>
</comment>
<comment type="domain">
    <text evidence="2">The extracellular domain contributes to synaptic contact formation.</text>
</comment>
<comment type="domain">
    <text evidence="12">The GABA-binding pockets are located at the interface between neighboring alpha and beta subunits.</text>
</comment>
<comment type="domain">
    <text evidence="12">GABAARs subunits share a common topological structure: a peptide sequence made up of a long extracellular N-terminal, four transmembrane domains, intracellular or cytoplasmic domain located between the third and the fourth transmembrane domains.</text>
</comment>
<comment type="miscellaneous">
    <text evidence="8">Functions as a receptor for diazepines and various anesthetics, such as pentobarbital; these are bound at a separate allosteric effector binding site.</text>
</comment>
<comment type="similarity">
    <text evidence="17">Belongs to the ligand-gated ion channel (TC 1.A.9) family. Gamma-aminobutyric acid receptor (TC 1.A.9.5) subfamily. GABRA1 sub-subfamily.</text>
</comment>